<evidence type="ECO:0000250" key="1"/>
<evidence type="ECO:0000256" key="2">
    <source>
        <dbReference type="SAM" id="MobiDB-lite"/>
    </source>
</evidence>
<evidence type="ECO:0000305" key="3"/>
<feature type="chain" id="PRO_0000295529" description="COPII coat assembly protein sec16">
    <location>
        <begin position="1"/>
        <end position="1832"/>
    </location>
</feature>
<feature type="region of interest" description="Disordered" evidence="2">
    <location>
        <begin position="1"/>
        <end position="163"/>
    </location>
</feature>
<feature type="region of interest" description="Disordered" evidence="2">
    <location>
        <begin position="183"/>
        <end position="209"/>
    </location>
</feature>
<feature type="region of interest" description="Disordered" evidence="2">
    <location>
        <begin position="240"/>
        <end position="269"/>
    </location>
</feature>
<feature type="region of interest" description="Disordered" evidence="2">
    <location>
        <begin position="345"/>
        <end position="863"/>
    </location>
</feature>
<feature type="region of interest" description="Disordered" evidence="2">
    <location>
        <begin position="1420"/>
        <end position="1482"/>
    </location>
</feature>
<feature type="region of interest" description="Disordered" evidence="2">
    <location>
        <begin position="1509"/>
        <end position="1679"/>
    </location>
</feature>
<feature type="region of interest" description="Disordered" evidence="2">
    <location>
        <begin position="1692"/>
        <end position="1832"/>
    </location>
</feature>
<feature type="compositionally biased region" description="Polar residues" evidence="2">
    <location>
        <begin position="57"/>
        <end position="74"/>
    </location>
</feature>
<feature type="compositionally biased region" description="Basic and acidic residues" evidence="2">
    <location>
        <begin position="91"/>
        <end position="118"/>
    </location>
</feature>
<feature type="compositionally biased region" description="Polar residues" evidence="2">
    <location>
        <begin position="123"/>
        <end position="133"/>
    </location>
</feature>
<feature type="compositionally biased region" description="Basic and acidic residues" evidence="2">
    <location>
        <begin position="137"/>
        <end position="151"/>
    </location>
</feature>
<feature type="compositionally biased region" description="Acidic residues" evidence="2">
    <location>
        <begin position="257"/>
        <end position="269"/>
    </location>
</feature>
<feature type="compositionally biased region" description="Acidic residues" evidence="2">
    <location>
        <begin position="348"/>
        <end position="361"/>
    </location>
</feature>
<feature type="compositionally biased region" description="Acidic residues" evidence="2">
    <location>
        <begin position="369"/>
        <end position="383"/>
    </location>
</feature>
<feature type="compositionally biased region" description="Polar residues" evidence="2">
    <location>
        <begin position="422"/>
        <end position="457"/>
    </location>
</feature>
<feature type="compositionally biased region" description="Basic and acidic residues" evidence="2">
    <location>
        <begin position="471"/>
        <end position="480"/>
    </location>
</feature>
<feature type="compositionally biased region" description="Pro residues" evidence="2">
    <location>
        <begin position="510"/>
        <end position="524"/>
    </location>
</feature>
<feature type="compositionally biased region" description="Polar residues" evidence="2">
    <location>
        <begin position="528"/>
        <end position="546"/>
    </location>
</feature>
<feature type="compositionally biased region" description="Polar residues" evidence="2">
    <location>
        <begin position="590"/>
        <end position="603"/>
    </location>
</feature>
<feature type="compositionally biased region" description="Low complexity" evidence="2">
    <location>
        <begin position="622"/>
        <end position="636"/>
    </location>
</feature>
<feature type="compositionally biased region" description="Pro residues" evidence="2">
    <location>
        <begin position="653"/>
        <end position="665"/>
    </location>
</feature>
<feature type="compositionally biased region" description="Polar residues" evidence="2">
    <location>
        <begin position="679"/>
        <end position="688"/>
    </location>
</feature>
<feature type="compositionally biased region" description="Basic and acidic residues" evidence="2">
    <location>
        <begin position="705"/>
        <end position="721"/>
    </location>
</feature>
<feature type="compositionally biased region" description="Polar residues" evidence="2">
    <location>
        <begin position="738"/>
        <end position="747"/>
    </location>
</feature>
<feature type="compositionally biased region" description="Low complexity" evidence="2">
    <location>
        <begin position="814"/>
        <end position="829"/>
    </location>
</feature>
<feature type="compositionally biased region" description="Polar residues" evidence="2">
    <location>
        <begin position="845"/>
        <end position="854"/>
    </location>
</feature>
<feature type="compositionally biased region" description="Polar residues" evidence="2">
    <location>
        <begin position="1428"/>
        <end position="1439"/>
    </location>
</feature>
<feature type="compositionally biased region" description="Polar residues" evidence="2">
    <location>
        <begin position="1513"/>
        <end position="1538"/>
    </location>
</feature>
<feature type="compositionally biased region" description="Polar residues" evidence="2">
    <location>
        <begin position="1550"/>
        <end position="1559"/>
    </location>
</feature>
<feature type="compositionally biased region" description="Basic and acidic residues" evidence="2">
    <location>
        <begin position="1594"/>
        <end position="1603"/>
    </location>
</feature>
<feature type="compositionally biased region" description="Basic and acidic residues" evidence="2">
    <location>
        <begin position="1620"/>
        <end position="1644"/>
    </location>
</feature>
<feature type="compositionally biased region" description="Pro residues" evidence="2">
    <location>
        <begin position="1725"/>
        <end position="1736"/>
    </location>
</feature>
<feature type="compositionally biased region" description="Low complexity" evidence="2">
    <location>
        <begin position="1737"/>
        <end position="1756"/>
    </location>
</feature>
<feature type="compositionally biased region" description="Pro residues" evidence="2">
    <location>
        <begin position="1757"/>
        <end position="1769"/>
    </location>
</feature>
<keyword id="KW-0072">Autophagy</keyword>
<keyword id="KW-0256">Endoplasmic reticulum</keyword>
<keyword id="KW-0931">ER-Golgi transport</keyword>
<keyword id="KW-0472">Membrane</keyword>
<keyword id="KW-0653">Protein transport</keyword>
<keyword id="KW-1185">Reference proteome</keyword>
<keyword id="KW-0813">Transport</keyword>
<accession>Q4WD95</accession>
<name>SEC16_ASPFU</name>
<gene>
    <name type="primary">sec16</name>
    <name type="ORF">AFUA_6G03960</name>
</gene>
<organism>
    <name type="scientific">Aspergillus fumigatus (strain ATCC MYA-4609 / CBS 101355 / FGSC A1100 / Af293)</name>
    <name type="common">Neosartorya fumigata</name>
    <dbReference type="NCBI Taxonomy" id="330879"/>
    <lineage>
        <taxon>Eukaryota</taxon>
        <taxon>Fungi</taxon>
        <taxon>Dikarya</taxon>
        <taxon>Ascomycota</taxon>
        <taxon>Pezizomycotina</taxon>
        <taxon>Eurotiomycetes</taxon>
        <taxon>Eurotiomycetidae</taxon>
        <taxon>Eurotiales</taxon>
        <taxon>Aspergillaceae</taxon>
        <taxon>Aspergillus</taxon>
        <taxon>Aspergillus subgen. Fumigati</taxon>
    </lineage>
</organism>
<sequence length="1832" mass="194987">MAQPEGVLAWNPAFRPEDNDSVATDLARLALDSGKEVSETTDVDTHVSPPAEEFTDENGSIESKTAISADTSDQGAPDLVDSNTPAADNGSKPDTEEPDKPSRDESIFMQTDKSRAVEDVTENVPTENGNVDITSGLEEHVAEEPHYEGPEKSTGLAGRNDAQDLFEGNDTAWMDEAEGEVNGATVNGEASGTRPGFWDSLGDNERDNEDDFFNQLKTQTKPIYSPPETEARFEEGIPLLGQGAAPQNNHAHKGESQVDDVFGDDEDDESGFFSEIQKRTSAEGPPPITRKSTSQVIDSINAVSDSMFSKQLPAAAELNNSLAVPTADGEIKNSPSEEDLAARWQAELSDDADETMPTEDDLAARWQAELDDDDDDLLLDDDTTNAQRPPEAANIDHMNDTSMLQSPFGTPENLARPKVQPVSYTPHQPSTSDLLSGIPAQNTAAQPTNASMSSYFSAQAPPNPVTTRAESFAERSKEGYKSPYDIPEDLARPRRAVANSRTVVAQPGTVPKPPPRSSSIPAPPLKASTVSPAPLGTSSTAPTAPQKNFFEELPLPPPRPKSRPASSGRYTPNAPVSAPSLPQSIPPPANQYSNVPGAPQSNIGPPDPPQLQQPERLDPYSNLLAPNVPSAPAVPSTASRYSPRPPGVQAGVKPPPSPRYSPAPPQSTNAVAAAPRNRYASQPASISGQGAALQFQPRTSSPLAYHEKIHYEDQGQSEERPQLQSTASPPPLNHSHPSEQPVSSENKGPSGVDVLENVPPLSTRPQSPPKNPYAPSAYTNEFANRVAPVSTGPPIAGMTGVLNSSTEESPFVPPRRSQTQSPSQTLSPRLSVPSLDPFQRPASVHGSTSPTRTVNPYAPAPVPTHNRAPSQVLEFIPPTDGQQLDSLERWKGAPIFKFGFGGAVISCFPKHIPRYSAGQAAPMIKSCPGEVRISQLNDWLPAAEGIVQHPGPLKGKSKKKDLVAWLSSKIAAFENADIPDFDRLSPDASKLREEKTLLWKVIRVLVENDGVLEGSVEAQKSLRNLLFPNLQDSGPNQSLGDVFTPSATLQPLNAPSQPDAVDSRSVDLLRDTLVLGEREKAVWAAVDKRLWGHAMIIASRMDRSVWQQVVQEFVRREVRSATSRTESLAAFYEILAGNIEESIDELVPPSARAGLQMISKVDGHGPAKNSLDGLDSWRETVGLVLSNRSPDDQRALVALGRLLLSYNRTEAAHICFILSRVAVFGGLDDPQANIVLLGVDHQRLSSCAALYNDDSILLTEAYEFATSVLAGSSVSTLPHLLAFKLIHAWSLAERGRKSEAQQYCDAIAAALKATTKPSGYHNQHLFFGVDELSARLRETTSDGGSSWISRPSMEKVSGSMWAKFNSFVAGDDSDAASTGSVKAEEIGPFARVSGTPTISRSPSVSDIYGSYPVAAAQPLPATGPSRYQPVSQYAPSASPEQLRGRSSMDSQRSASFGYPLGQRRGSQEPSTPVDTNMFHGMPMYGSPPVAGYQSTPPQSSYMPLAPVAEDSASGAQQESFSAHSQVSDNAPSHRSSTYAPEPFGHPFDTQAVSTTSQPDQGGYMPPTSSGAYEPPSFESNTESADGAQDESTEEDKPKKKSIMDEDDDEDLAARAAAIQKAERARRDREADEAFRKAAEADAKKPPPATGKKGWFSGWFGGKKDDNSGGGPIRAKLGEENSFYYDTELKKWVNKKDPGSAAPTRGTPPPPKGSAPPSRSMSGSGGPPPAMATPPPTGASGSRPSSSAGAPTSVSASPAPPSLGAPPPAIPRSVSTGAVLPTPPSSSAGAPPRPATSLSNASSIDDLLGAPQARKGPAARGKKKGRYVDVMAK</sequence>
<comment type="function">
    <text evidence="1">Involved in the initiation of assembly of the COPII coat required for the formation of transport vesicles from the endoplasmic reticulum (ER) and the selection of cargo molecules. Also involved in autophagy (By similarity).</text>
</comment>
<comment type="subcellular location">
    <subcellularLocation>
        <location evidence="1">Endoplasmic reticulum membrane</location>
        <topology evidence="1">Peripheral membrane protein</topology>
        <orientation evidence="1">Cytoplasmic side</orientation>
    </subcellularLocation>
</comment>
<comment type="similarity">
    <text evidence="3">Belongs to the SEC16 family.</text>
</comment>
<reference key="1">
    <citation type="journal article" date="2005" name="Nature">
        <title>Genomic sequence of the pathogenic and allergenic filamentous fungus Aspergillus fumigatus.</title>
        <authorList>
            <person name="Nierman W.C."/>
            <person name="Pain A."/>
            <person name="Anderson M.J."/>
            <person name="Wortman J.R."/>
            <person name="Kim H.S."/>
            <person name="Arroyo J."/>
            <person name="Berriman M."/>
            <person name="Abe K."/>
            <person name="Archer D.B."/>
            <person name="Bermejo C."/>
            <person name="Bennett J.W."/>
            <person name="Bowyer P."/>
            <person name="Chen D."/>
            <person name="Collins M."/>
            <person name="Coulsen R."/>
            <person name="Davies R."/>
            <person name="Dyer P.S."/>
            <person name="Farman M.L."/>
            <person name="Fedorova N."/>
            <person name="Fedorova N.D."/>
            <person name="Feldblyum T.V."/>
            <person name="Fischer R."/>
            <person name="Fosker N."/>
            <person name="Fraser A."/>
            <person name="Garcia J.L."/>
            <person name="Garcia M.J."/>
            <person name="Goble A."/>
            <person name="Goldman G.H."/>
            <person name="Gomi K."/>
            <person name="Griffith-Jones S."/>
            <person name="Gwilliam R."/>
            <person name="Haas B.J."/>
            <person name="Haas H."/>
            <person name="Harris D.E."/>
            <person name="Horiuchi H."/>
            <person name="Huang J."/>
            <person name="Humphray S."/>
            <person name="Jimenez J."/>
            <person name="Keller N."/>
            <person name="Khouri H."/>
            <person name="Kitamoto K."/>
            <person name="Kobayashi T."/>
            <person name="Konzack S."/>
            <person name="Kulkarni R."/>
            <person name="Kumagai T."/>
            <person name="Lafton A."/>
            <person name="Latge J.-P."/>
            <person name="Li W."/>
            <person name="Lord A."/>
            <person name="Lu C."/>
            <person name="Majoros W.H."/>
            <person name="May G.S."/>
            <person name="Miller B.L."/>
            <person name="Mohamoud Y."/>
            <person name="Molina M."/>
            <person name="Monod M."/>
            <person name="Mouyna I."/>
            <person name="Mulligan S."/>
            <person name="Murphy L.D."/>
            <person name="O'Neil S."/>
            <person name="Paulsen I."/>
            <person name="Penalva M.A."/>
            <person name="Pertea M."/>
            <person name="Price C."/>
            <person name="Pritchard B.L."/>
            <person name="Quail M.A."/>
            <person name="Rabbinowitsch E."/>
            <person name="Rawlins N."/>
            <person name="Rajandream M.A."/>
            <person name="Reichard U."/>
            <person name="Renauld H."/>
            <person name="Robson G.D."/>
            <person name="Rodriguez de Cordoba S."/>
            <person name="Rodriguez-Pena J.M."/>
            <person name="Ronning C.M."/>
            <person name="Rutter S."/>
            <person name="Salzberg S.L."/>
            <person name="Sanchez M."/>
            <person name="Sanchez-Ferrero J.C."/>
            <person name="Saunders D."/>
            <person name="Seeger K."/>
            <person name="Squares R."/>
            <person name="Squares S."/>
            <person name="Takeuchi M."/>
            <person name="Tekaia F."/>
            <person name="Turner G."/>
            <person name="Vazquez de Aldana C.R."/>
            <person name="Weidman J."/>
            <person name="White O."/>
            <person name="Woodward J.R."/>
            <person name="Yu J.-H."/>
            <person name="Fraser C.M."/>
            <person name="Galagan J.E."/>
            <person name="Asai K."/>
            <person name="Machida M."/>
            <person name="Hall N."/>
            <person name="Barrell B.G."/>
            <person name="Denning D.W."/>
        </authorList>
    </citation>
    <scope>NUCLEOTIDE SEQUENCE [LARGE SCALE GENOMIC DNA]</scope>
    <source>
        <strain>ATCC MYA-4609 / CBS 101355 / FGSC A1100 / Af293</strain>
    </source>
</reference>
<protein>
    <recommendedName>
        <fullName>COPII coat assembly protein sec16</fullName>
    </recommendedName>
    <alternativeName>
        <fullName>Protein transport protein sec16</fullName>
    </alternativeName>
</protein>
<proteinExistence type="inferred from homology"/>
<dbReference type="EMBL" id="AAHF01000012">
    <property type="protein sequence ID" value="EAL85643.1"/>
    <property type="molecule type" value="Genomic_DNA"/>
</dbReference>
<dbReference type="RefSeq" id="XP_747681.1">
    <property type="nucleotide sequence ID" value="XM_742588.1"/>
</dbReference>
<dbReference type="STRING" id="330879.Q4WD95"/>
<dbReference type="EnsemblFungi" id="EAL85643">
    <property type="protein sequence ID" value="EAL85643"/>
    <property type="gene ID" value="AFUA_6G03960"/>
</dbReference>
<dbReference type="GeneID" id="3505046"/>
<dbReference type="KEGG" id="afm:AFUA_6G03960"/>
<dbReference type="VEuPathDB" id="FungiDB:Afu6g03960"/>
<dbReference type="eggNOG" id="KOG1913">
    <property type="taxonomic scope" value="Eukaryota"/>
</dbReference>
<dbReference type="HOGENOM" id="CLU_001147_0_0_1"/>
<dbReference type="InParanoid" id="Q4WD95"/>
<dbReference type="OMA" id="YKSPYDL"/>
<dbReference type="OrthoDB" id="8918678at2759"/>
<dbReference type="Proteomes" id="UP000002530">
    <property type="component" value="Chromosome 6"/>
</dbReference>
<dbReference type="GO" id="GO:0070971">
    <property type="term" value="C:endoplasmic reticulum exit site"/>
    <property type="evidence" value="ECO:0000318"/>
    <property type="project" value="GO_Central"/>
</dbReference>
<dbReference type="GO" id="GO:0005789">
    <property type="term" value="C:endoplasmic reticulum membrane"/>
    <property type="evidence" value="ECO:0007669"/>
    <property type="project" value="UniProtKB-SubCell"/>
</dbReference>
<dbReference type="GO" id="GO:0012507">
    <property type="term" value="C:ER to Golgi transport vesicle membrane"/>
    <property type="evidence" value="ECO:0000318"/>
    <property type="project" value="GO_Central"/>
</dbReference>
<dbReference type="GO" id="GO:0006914">
    <property type="term" value="P:autophagy"/>
    <property type="evidence" value="ECO:0007669"/>
    <property type="project" value="UniProtKB-KW"/>
</dbReference>
<dbReference type="GO" id="GO:0007030">
    <property type="term" value="P:Golgi organization"/>
    <property type="evidence" value="ECO:0000318"/>
    <property type="project" value="GO_Central"/>
</dbReference>
<dbReference type="GO" id="GO:0046907">
    <property type="term" value="P:intracellular transport"/>
    <property type="evidence" value="ECO:0007669"/>
    <property type="project" value="UniProtKB-ARBA"/>
</dbReference>
<dbReference type="GO" id="GO:0070973">
    <property type="term" value="P:protein localization to endoplasmic reticulum exit site"/>
    <property type="evidence" value="ECO:0000318"/>
    <property type="project" value="GO_Central"/>
</dbReference>
<dbReference type="GO" id="GO:0015031">
    <property type="term" value="P:protein transport"/>
    <property type="evidence" value="ECO:0007669"/>
    <property type="project" value="UniProtKB-KW"/>
</dbReference>
<dbReference type="GO" id="GO:0016192">
    <property type="term" value="P:vesicle-mediated transport"/>
    <property type="evidence" value="ECO:0007669"/>
    <property type="project" value="UniProtKB-KW"/>
</dbReference>
<dbReference type="CDD" id="cd09233">
    <property type="entry name" value="ACE1-Sec16-like"/>
    <property type="match status" value="1"/>
</dbReference>
<dbReference type="FunFam" id="1.25.40.1030:FF:000008">
    <property type="entry name" value="Protein transport protein sec16"/>
    <property type="match status" value="1"/>
</dbReference>
<dbReference type="Gene3D" id="1.25.40.1030">
    <property type="match status" value="1"/>
</dbReference>
<dbReference type="InterPro" id="IPR024340">
    <property type="entry name" value="Sec16_CCD"/>
</dbReference>
<dbReference type="InterPro" id="IPR024468">
    <property type="entry name" value="Sec16_N"/>
</dbReference>
<dbReference type="InterPro" id="IPR024298">
    <property type="entry name" value="Sec16_Sec23-bd"/>
</dbReference>
<dbReference type="PANTHER" id="PTHR13402">
    <property type="entry name" value="RGPR-RELATED"/>
    <property type="match status" value="1"/>
</dbReference>
<dbReference type="PANTHER" id="PTHR13402:SF6">
    <property type="entry name" value="SECRETORY 16, ISOFORM I"/>
    <property type="match status" value="1"/>
</dbReference>
<dbReference type="Pfam" id="PF12932">
    <property type="entry name" value="Sec16"/>
    <property type="match status" value="1"/>
</dbReference>
<dbReference type="Pfam" id="PF12935">
    <property type="entry name" value="Sec16_N"/>
    <property type="match status" value="1"/>
</dbReference>
<dbReference type="Pfam" id="PF12931">
    <property type="entry name" value="TPR_Sec16"/>
    <property type="match status" value="1"/>
</dbReference>